<dbReference type="EC" id="6.1.1.19" evidence="1"/>
<dbReference type="EMBL" id="CP000419">
    <property type="protein sequence ID" value="ABJ65435.1"/>
    <property type="molecule type" value="Genomic_DNA"/>
</dbReference>
<dbReference type="RefSeq" id="WP_011226739.1">
    <property type="nucleotide sequence ID" value="NC_008532.1"/>
</dbReference>
<dbReference type="SMR" id="Q03MY7"/>
<dbReference type="KEGG" id="ste:STER_0065"/>
<dbReference type="HOGENOM" id="CLU_006406_6_1_9"/>
<dbReference type="GO" id="GO:0005737">
    <property type="term" value="C:cytoplasm"/>
    <property type="evidence" value="ECO:0007669"/>
    <property type="project" value="UniProtKB-SubCell"/>
</dbReference>
<dbReference type="GO" id="GO:0004814">
    <property type="term" value="F:arginine-tRNA ligase activity"/>
    <property type="evidence" value="ECO:0007669"/>
    <property type="project" value="UniProtKB-UniRule"/>
</dbReference>
<dbReference type="GO" id="GO:0005524">
    <property type="term" value="F:ATP binding"/>
    <property type="evidence" value="ECO:0007669"/>
    <property type="project" value="UniProtKB-UniRule"/>
</dbReference>
<dbReference type="GO" id="GO:0006420">
    <property type="term" value="P:arginyl-tRNA aminoacylation"/>
    <property type="evidence" value="ECO:0007669"/>
    <property type="project" value="UniProtKB-UniRule"/>
</dbReference>
<dbReference type="CDD" id="cd07956">
    <property type="entry name" value="Anticodon_Ia_Arg"/>
    <property type="match status" value="1"/>
</dbReference>
<dbReference type="CDD" id="cd00671">
    <property type="entry name" value="ArgRS_core"/>
    <property type="match status" value="1"/>
</dbReference>
<dbReference type="FunFam" id="3.40.50.620:FF:000116">
    <property type="entry name" value="Arginine--tRNA ligase"/>
    <property type="match status" value="1"/>
</dbReference>
<dbReference type="FunFam" id="1.10.730.10:FF:000006">
    <property type="entry name" value="Arginyl-tRNA synthetase 2, mitochondrial"/>
    <property type="match status" value="1"/>
</dbReference>
<dbReference type="Gene3D" id="3.30.1360.70">
    <property type="entry name" value="Arginyl tRNA synthetase N-terminal domain"/>
    <property type="match status" value="1"/>
</dbReference>
<dbReference type="Gene3D" id="3.40.50.620">
    <property type="entry name" value="HUPs"/>
    <property type="match status" value="1"/>
</dbReference>
<dbReference type="Gene3D" id="1.10.730.10">
    <property type="entry name" value="Isoleucyl-tRNA Synthetase, Domain 1"/>
    <property type="match status" value="1"/>
</dbReference>
<dbReference type="HAMAP" id="MF_00123">
    <property type="entry name" value="Arg_tRNA_synth"/>
    <property type="match status" value="1"/>
</dbReference>
<dbReference type="InterPro" id="IPR001278">
    <property type="entry name" value="Arg-tRNA-ligase"/>
</dbReference>
<dbReference type="InterPro" id="IPR005148">
    <property type="entry name" value="Arg-tRNA-synth_N"/>
</dbReference>
<dbReference type="InterPro" id="IPR036695">
    <property type="entry name" value="Arg-tRNA-synth_N_sf"/>
</dbReference>
<dbReference type="InterPro" id="IPR035684">
    <property type="entry name" value="ArgRS_core"/>
</dbReference>
<dbReference type="InterPro" id="IPR008909">
    <property type="entry name" value="DALR_anticod-bd"/>
</dbReference>
<dbReference type="InterPro" id="IPR014729">
    <property type="entry name" value="Rossmann-like_a/b/a_fold"/>
</dbReference>
<dbReference type="InterPro" id="IPR009080">
    <property type="entry name" value="tRNAsynth_Ia_anticodon-bd"/>
</dbReference>
<dbReference type="NCBIfam" id="TIGR00456">
    <property type="entry name" value="argS"/>
    <property type="match status" value="1"/>
</dbReference>
<dbReference type="PANTHER" id="PTHR11956:SF5">
    <property type="entry name" value="ARGININE--TRNA LIGASE, CYTOPLASMIC"/>
    <property type="match status" value="1"/>
</dbReference>
<dbReference type="PANTHER" id="PTHR11956">
    <property type="entry name" value="ARGINYL-TRNA SYNTHETASE"/>
    <property type="match status" value="1"/>
</dbReference>
<dbReference type="Pfam" id="PF03485">
    <property type="entry name" value="Arg_tRNA_synt_N"/>
    <property type="match status" value="1"/>
</dbReference>
<dbReference type="Pfam" id="PF05746">
    <property type="entry name" value="DALR_1"/>
    <property type="match status" value="1"/>
</dbReference>
<dbReference type="Pfam" id="PF00750">
    <property type="entry name" value="tRNA-synt_1d"/>
    <property type="match status" value="1"/>
</dbReference>
<dbReference type="PRINTS" id="PR01038">
    <property type="entry name" value="TRNASYNTHARG"/>
</dbReference>
<dbReference type="SMART" id="SM01016">
    <property type="entry name" value="Arg_tRNA_synt_N"/>
    <property type="match status" value="1"/>
</dbReference>
<dbReference type="SMART" id="SM00836">
    <property type="entry name" value="DALR_1"/>
    <property type="match status" value="1"/>
</dbReference>
<dbReference type="SUPFAM" id="SSF47323">
    <property type="entry name" value="Anticodon-binding domain of a subclass of class I aminoacyl-tRNA synthetases"/>
    <property type="match status" value="1"/>
</dbReference>
<dbReference type="SUPFAM" id="SSF55190">
    <property type="entry name" value="Arginyl-tRNA synthetase (ArgRS), N-terminal 'additional' domain"/>
    <property type="match status" value="1"/>
</dbReference>
<dbReference type="SUPFAM" id="SSF52374">
    <property type="entry name" value="Nucleotidylyl transferase"/>
    <property type="match status" value="1"/>
</dbReference>
<comment type="catalytic activity">
    <reaction evidence="1">
        <text>tRNA(Arg) + L-arginine + ATP = L-arginyl-tRNA(Arg) + AMP + diphosphate</text>
        <dbReference type="Rhea" id="RHEA:20301"/>
        <dbReference type="Rhea" id="RHEA-COMP:9658"/>
        <dbReference type="Rhea" id="RHEA-COMP:9673"/>
        <dbReference type="ChEBI" id="CHEBI:30616"/>
        <dbReference type="ChEBI" id="CHEBI:32682"/>
        <dbReference type="ChEBI" id="CHEBI:33019"/>
        <dbReference type="ChEBI" id="CHEBI:78442"/>
        <dbReference type="ChEBI" id="CHEBI:78513"/>
        <dbReference type="ChEBI" id="CHEBI:456215"/>
        <dbReference type="EC" id="6.1.1.19"/>
    </reaction>
</comment>
<comment type="subunit">
    <text evidence="1">Monomer.</text>
</comment>
<comment type="subcellular location">
    <subcellularLocation>
        <location evidence="1">Cytoplasm</location>
    </subcellularLocation>
</comment>
<comment type="similarity">
    <text evidence="1">Belongs to the class-I aminoacyl-tRNA synthetase family.</text>
</comment>
<organism>
    <name type="scientific">Streptococcus thermophilus (strain ATCC BAA-491 / LMD-9)</name>
    <dbReference type="NCBI Taxonomy" id="322159"/>
    <lineage>
        <taxon>Bacteria</taxon>
        <taxon>Bacillati</taxon>
        <taxon>Bacillota</taxon>
        <taxon>Bacilli</taxon>
        <taxon>Lactobacillales</taxon>
        <taxon>Streptococcaceae</taxon>
        <taxon>Streptococcus</taxon>
    </lineage>
</organism>
<evidence type="ECO:0000255" key="1">
    <source>
        <dbReference type="HAMAP-Rule" id="MF_00123"/>
    </source>
</evidence>
<protein>
    <recommendedName>
        <fullName evidence="1">Arginine--tRNA ligase</fullName>
        <ecNumber evidence="1">6.1.1.19</ecNumber>
    </recommendedName>
    <alternativeName>
        <fullName evidence="1">Arginyl-tRNA synthetase</fullName>
        <shortName evidence="1">ArgRS</shortName>
    </alternativeName>
</protein>
<proteinExistence type="inferred from homology"/>
<feature type="chain" id="PRO_1000018135" description="Arginine--tRNA ligase">
    <location>
        <begin position="1"/>
        <end position="563"/>
    </location>
</feature>
<feature type="short sequence motif" description="'HIGH' region">
    <location>
        <begin position="121"/>
        <end position="131"/>
    </location>
</feature>
<name>SYR_STRTD</name>
<reference key="1">
    <citation type="journal article" date="2006" name="Proc. Natl. Acad. Sci. U.S.A.">
        <title>Comparative genomics of the lactic acid bacteria.</title>
        <authorList>
            <person name="Makarova K.S."/>
            <person name="Slesarev A."/>
            <person name="Wolf Y.I."/>
            <person name="Sorokin A."/>
            <person name="Mirkin B."/>
            <person name="Koonin E.V."/>
            <person name="Pavlov A."/>
            <person name="Pavlova N."/>
            <person name="Karamychev V."/>
            <person name="Polouchine N."/>
            <person name="Shakhova V."/>
            <person name="Grigoriev I."/>
            <person name="Lou Y."/>
            <person name="Rohksar D."/>
            <person name="Lucas S."/>
            <person name="Huang K."/>
            <person name="Goodstein D.M."/>
            <person name="Hawkins T."/>
            <person name="Plengvidhya V."/>
            <person name="Welker D."/>
            <person name="Hughes J."/>
            <person name="Goh Y."/>
            <person name="Benson A."/>
            <person name="Baldwin K."/>
            <person name="Lee J.-H."/>
            <person name="Diaz-Muniz I."/>
            <person name="Dosti B."/>
            <person name="Smeianov V."/>
            <person name="Wechter W."/>
            <person name="Barabote R."/>
            <person name="Lorca G."/>
            <person name="Altermann E."/>
            <person name="Barrangou R."/>
            <person name="Ganesan B."/>
            <person name="Xie Y."/>
            <person name="Rawsthorne H."/>
            <person name="Tamir D."/>
            <person name="Parker C."/>
            <person name="Breidt F."/>
            <person name="Broadbent J.R."/>
            <person name="Hutkins R."/>
            <person name="O'Sullivan D."/>
            <person name="Steele J."/>
            <person name="Unlu G."/>
            <person name="Saier M.H. Jr."/>
            <person name="Klaenhammer T."/>
            <person name="Richardson P."/>
            <person name="Kozyavkin S."/>
            <person name="Weimer B.C."/>
            <person name="Mills D.A."/>
        </authorList>
    </citation>
    <scope>NUCLEOTIDE SEQUENCE [LARGE SCALE GENOMIC DNA]</scope>
    <source>
        <strain>ATCC BAA-491 / LMD-9</strain>
    </source>
</reference>
<gene>
    <name evidence="1" type="primary">argS</name>
    <name type="ordered locus">STER_0065</name>
</gene>
<keyword id="KW-0030">Aminoacyl-tRNA synthetase</keyword>
<keyword id="KW-0067">ATP-binding</keyword>
<keyword id="KW-0963">Cytoplasm</keyword>
<keyword id="KW-0436">Ligase</keyword>
<keyword id="KW-0547">Nucleotide-binding</keyword>
<keyword id="KW-0648">Protein biosynthesis</keyword>
<accession>Q03MY7</accession>
<sequence>MNTKELIAAEIAKVVPELEQENIQNLLEIPKNADMGDLAFPAFSLAKVLRKAPQMIAADIAEKIDASNFEKVEAVGPYINIFLDKSKISADVLGQVIAQGSHYADQNIGNGRNIAFDMSSPNIAKPFSIGHLRSTVIADALANIVAKQGYKPVRINHLGDWGKQFGMLIVAYKKWGSEEAVKANPINELLQLYVRINAEAEEDPSVDEEAREWFRKLEAGDEEATALWQWFRDESLVEFNRLYDELGVSFDSYNGEAFYNDKMDEVVDILTEKGLLQESQGAQVVNLEKYGIEHPALIKKSDGATLYITRDLAAALYRKRTYDFAKAIYVVGNEQSAHFKQLKAVLKEMGYNWSDDMTHVAFGLVTKNGKKLSTRKGNVILLEPTIAEAVNRAQAQIEAKNPNLPNKEAIAHAVGVGAIKFYDLKTDRMNGYDFDLDAMVSFEGETGPYVQYAHARIQSILRKADFTPSADATYSLNDVESWEIIKLLQDFPRIINRASDNFEPSIVAKFAISLAQAFNKYYAHTRILDESPERDSRLALCYATATVLKEALRLLGVEAPDEM</sequence>